<reference key="1">
    <citation type="journal article" date="2003" name="DNA Res.">
        <title>Complete genome structure of Gloeobacter violaceus PCC 7421, a cyanobacterium that lacks thylakoids.</title>
        <authorList>
            <person name="Nakamura Y."/>
            <person name="Kaneko T."/>
            <person name="Sato S."/>
            <person name="Mimuro M."/>
            <person name="Miyashita H."/>
            <person name="Tsuchiya T."/>
            <person name="Sasamoto S."/>
            <person name="Watanabe A."/>
            <person name="Kawashima K."/>
            <person name="Kishida Y."/>
            <person name="Kiyokawa C."/>
            <person name="Kohara M."/>
            <person name="Matsumoto M."/>
            <person name="Matsuno A."/>
            <person name="Nakazaki N."/>
            <person name="Shimpo S."/>
            <person name="Takeuchi C."/>
            <person name="Yamada M."/>
            <person name="Tabata S."/>
        </authorList>
    </citation>
    <scope>NUCLEOTIDE SEQUENCE [LARGE SCALE GENOMIC DNA]</scope>
    <source>
        <strain>ATCC 29082 / PCC 7421</strain>
    </source>
</reference>
<accession>Q7NFA4</accession>
<dbReference type="EC" id="1.17.7.1" evidence="1"/>
<dbReference type="EMBL" id="BA000045">
    <property type="protein sequence ID" value="BAC91563.1"/>
    <property type="molecule type" value="Genomic_DNA"/>
</dbReference>
<dbReference type="RefSeq" id="NP_926568.1">
    <property type="nucleotide sequence ID" value="NC_005125.1"/>
</dbReference>
<dbReference type="RefSeq" id="WP_011143611.1">
    <property type="nucleotide sequence ID" value="NC_005125.1"/>
</dbReference>
<dbReference type="SMR" id="Q7NFA4"/>
<dbReference type="FunCoup" id="Q7NFA4">
    <property type="interactions" value="39"/>
</dbReference>
<dbReference type="STRING" id="251221.gene:10761137"/>
<dbReference type="EnsemblBacteria" id="BAC91563">
    <property type="protein sequence ID" value="BAC91563"/>
    <property type="gene ID" value="BAC91563"/>
</dbReference>
<dbReference type="KEGG" id="gvi:gll3622"/>
<dbReference type="PATRIC" id="fig|251221.4.peg.3656"/>
<dbReference type="eggNOG" id="COG0821">
    <property type="taxonomic scope" value="Bacteria"/>
</dbReference>
<dbReference type="HOGENOM" id="CLU_042258_0_0_3"/>
<dbReference type="InParanoid" id="Q7NFA4"/>
<dbReference type="OrthoDB" id="9803214at2"/>
<dbReference type="PhylomeDB" id="Q7NFA4"/>
<dbReference type="UniPathway" id="UPA00056">
    <property type="reaction ID" value="UER00096"/>
</dbReference>
<dbReference type="Proteomes" id="UP000000557">
    <property type="component" value="Chromosome"/>
</dbReference>
<dbReference type="GO" id="GO:0051539">
    <property type="term" value="F:4 iron, 4 sulfur cluster binding"/>
    <property type="evidence" value="ECO:0007669"/>
    <property type="project" value="UniProtKB-UniRule"/>
</dbReference>
<dbReference type="GO" id="GO:0046429">
    <property type="term" value="F:4-hydroxy-3-methylbut-2-en-1-yl diphosphate synthase activity (ferredoxin)"/>
    <property type="evidence" value="ECO:0000318"/>
    <property type="project" value="GO_Central"/>
</dbReference>
<dbReference type="GO" id="GO:0005506">
    <property type="term" value="F:iron ion binding"/>
    <property type="evidence" value="ECO:0007669"/>
    <property type="project" value="InterPro"/>
</dbReference>
<dbReference type="GO" id="GO:0019288">
    <property type="term" value="P:isopentenyl diphosphate biosynthetic process, methylerythritol 4-phosphate pathway"/>
    <property type="evidence" value="ECO:0000318"/>
    <property type="project" value="GO_Central"/>
</dbReference>
<dbReference type="GO" id="GO:0016114">
    <property type="term" value="P:terpenoid biosynthetic process"/>
    <property type="evidence" value="ECO:0007669"/>
    <property type="project" value="InterPro"/>
</dbReference>
<dbReference type="Gene3D" id="3.20.20.20">
    <property type="entry name" value="Dihydropteroate synthase-like"/>
    <property type="match status" value="1"/>
</dbReference>
<dbReference type="Gene3D" id="3.30.413.10">
    <property type="entry name" value="Sulfite Reductase Hemoprotein, domain 1"/>
    <property type="match status" value="1"/>
</dbReference>
<dbReference type="HAMAP" id="MF_00159">
    <property type="entry name" value="IspG"/>
    <property type="match status" value="1"/>
</dbReference>
<dbReference type="InterPro" id="IPR011005">
    <property type="entry name" value="Dihydropteroate_synth-like_sf"/>
</dbReference>
<dbReference type="InterPro" id="IPR016425">
    <property type="entry name" value="IspG_bac"/>
</dbReference>
<dbReference type="InterPro" id="IPR004588">
    <property type="entry name" value="IspG_bac-typ"/>
</dbReference>
<dbReference type="InterPro" id="IPR045854">
    <property type="entry name" value="NO2/SO3_Rdtase_4Fe4S_sf"/>
</dbReference>
<dbReference type="NCBIfam" id="TIGR00612">
    <property type="entry name" value="ispG_gcpE"/>
    <property type="match status" value="1"/>
</dbReference>
<dbReference type="NCBIfam" id="NF001540">
    <property type="entry name" value="PRK00366.1"/>
    <property type="match status" value="1"/>
</dbReference>
<dbReference type="PANTHER" id="PTHR30454">
    <property type="entry name" value="4-HYDROXY-3-METHYLBUT-2-EN-1-YL DIPHOSPHATE SYNTHASE"/>
    <property type="match status" value="1"/>
</dbReference>
<dbReference type="PANTHER" id="PTHR30454:SF0">
    <property type="entry name" value="4-HYDROXY-3-METHYLBUT-2-EN-1-YL DIPHOSPHATE SYNTHASE (FERREDOXIN), CHLOROPLASTIC"/>
    <property type="match status" value="1"/>
</dbReference>
<dbReference type="Pfam" id="PF04551">
    <property type="entry name" value="GcpE"/>
    <property type="match status" value="1"/>
</dbReference>
<dbReference type="PIRSF" id="PIRSF004640">
    <property type="entry name" value="IspG"/>
    <property type="match status" value="1"/>
</dbReference>
<dbReference type="SUPFAM" id="SSF56014">
    <property type="entry name" value="Nitrite and sulphite reductase 4Fe-4S domain-like"/>
    <property type="match status" value="1"/>
</dbReference>
<name>ISPG_GLOVI</name>
<comment type="function">
    <text evidence="1">Converts 2C-methyl-D-erythritol 2,4-cyclodiphosphate (ME-2,4cPP) into 1-hydroxy-2-methyl-2-(E)-butenyl 4-diphosphate.</text>
</comment>
<comment type="catalytic activity">
    <reaction evidence="1">
        <text>(2E)-4-hydroxy-3-methylbut-2-enyl diphosphate + 2 oxidized [2Fe-2S]-[ferredoxin] + H2O = 2-C-methyl-D-erythritol 2,4-cyclic diphosphate + 2 reduced [2Fe-2S]-[ferredoxin] + H(+)</text>
        <dbReference type="Rhea" id="RHEA:26119"/>
        <dbReference type="Rhea" id="RHEA-COMP:10000"/>
        <dbReference type="Rhea" id="RHEA-COMP:10001"/>
        <dbReference type="ChEBI" id="CHEBI:15377"/>
        <dbReference type="ChEBI" id="CHEBI:15378"/>
        <dbReference type="ChEBI" id="CHEBI:33737"/>
        <dbReference type="ChEBI" id="CHEBI:33738"/>
        <dbReference type="ChEBI" id="CHEBI:58483"/>
        <dbReference type="ChEBI" id="CHEBI:128753"/>
        <dbReference type="EC" id="1.17.7.1"/>
    </reaction>
</comment>
<comment type="cofactor">
    <cofactor evidence="1">
        <name>[4Fe-4S] cluster</name>
        <dbReference type="ChEBI" id="CHEBI:49883"/>
    </cofactor>
    <text evidence="1">Binds 1 [4Fe-4S] cluster.</text>
</comment>
<comment type="pathway">
    <text evidence="1">Isoprenoid biosynthesis; isopentenyl diphosphate biosynthesis via DXP pathway; isopentenyl diphosphate from 1-deoxy-D-xylulose 5-phosphate: step 5/6.</text>
</comment>
<comment type="similarity">
    <text evidence="1">Belongs to the IspG family.</text>
</comment>
<keyword id="KW-0004">4Fe-4S</keyword>
<keyword id="KW-0408">Iron</keyword>
<keyword id="KW-0411">Iron-sulfur</keyword>
<keyword id="KW-0414">Isoprene biosynthesis</keyword>
<keyword id="KW-0479">Metal-binding</keyword>
<keyword id="KW-0560">Oxidoreductase</keyword>
<keyword id="KW-1185">Reference proteome</keyword>
<feature type="chain" id="PRO_0000190582" description="4-hydroxy-3-methylbut-2-en-1-yl diphosphate synthase (ferredoxin)">
    <location>
        <begin position="1"/>
        <end position="396"/>
    </location>
</feature>
<feature type="binding site" evidence="1">
    <location>
        <position position="305"/>
    </location>
    <ligand>
        <name>[4Fe-4S] cluster</name>
        <dbReference type="ChEBI" id="CHEBI:49883"/>
    </ligand>
</feature>
<feature type="binding site" evidence="1">
    <location>
        <position position="308"/>
    </location>
    <ligand>
        <name>[4Fe-4S] cluster</name>
        <dbReference type="ChEBI" id="CHEBI:49883"/>
    </ligand>
</feature>
<feature type="binding site" evidence="1">
    <location>
        <position position="339"/>
    </location>
    <ligand>
        <name>[4Fe-4S] cluster</name>
        <dbReference type="ChEBI" id="CHEBI:49883"/>
    </ligand>
</feature>
<feature type="binding site" evidence="1">
    <location>
        <position position="346"/>
    </location>
    <ligand>
        <name>[4Fe-4S] cluster</name>
        <dbReference type="ChEBI" id="CHEBI:49883"/>
    </ligand>
</feature>
<protein>
    <recommendedName>
        <fullName evidence="1">4-hydroxy-3-methylbut-2-en-1-yl diphosphate synthase (ferredoxin)</fullName>
        <ecNumber evidence="1">1.17.7.1</ecNumber>
    </recommendedName>
    <alternativeName>
        <fullName evidence="1">1-hydroxy-2-methyl-2-(E)-butenyl 4-diphosphate synthase</fullName>
    </alternativeName>
</protein>
<sequence>MQTLDPVTPALLPLRRVTRPVQVGALTIGGNAPVVVQSMINEDTLDTPGAVAAIRALHKAGCELVRVTVPSLAHARALERIRKTLEDTYRPVPLVADVHHDGGPIALEVARHVDKVRINPGLFVFRRARLGDYTAEDVERARAQIREELKPLVDVLGAQDKAMRIGVNHGSLSERMLYIHGDTPEGMVQSAVEFVEICEQLGYHNLVISLKASRVPVMIAVYRLAAKLLDARGMHYPFHLGVTEAGDGEYGRIKSTAGIATLLADGIGDTIRVSLTEDPLKEIPVCYGILQALGLRRTMVEYVACPSCGRTLFNLETVLHRVREATRHLTGLNIAVMGCIVNGPGEMADADYGYVGKTPGTISLYRGREEIKKVPEARGVEALVDLIKSDGRWVDP</sequence>
<proteinExistence type="inferred from homology"/>
<gene>
    <name evidence="1" type="primary">ispG</name>
    <name type="ordered locus">gll3622</name>
</gene>
<organism>
    <name type="scientific">Gloeobacter violaceus (strain ATCC 29082 / PCC 7421)</name>
    <dbReference type="NCBI Taxonomy" id="251221"/>
    <lineage>
        <taxon>Bacteria</taxon>
        <taxon>Bacillati</taxon>
        <taxon>Cyanobacteriota</taxon>
        <taxon>Cyanophyceae</taxon>
        <taxon>Gloeobacterales</taxon>
        <taxon>Gloeobacteraceae</taxon>
        <taxon>Gloeobacter</taxon>
    </lineage>
</organism>
<evidence type="ECO:0000255" key="1">
    <source>
        <dbReference type="HAMAP-Rule" id="MF_00159"/>
    </source>
</evidence>